<name>TSAD_RICPR</name>
<reference key="1">
    <citation type="journal article" date="1998" name="Nature">
        <title>The genome sequence of Rickettsia prowazekii and the origin of mitochondria.</title>
        <authorList>
            <person name="Andersson S.G.E."/>
            <person name="Zomorodipour A."/>
            <person name="Andersson J.O."/>
            <person name="Sicheritz-Ponten T."/>
            <person name="Alsmark U.C.M."/>
            <person name="Podowski R.M."/>
            <person name="Naeslund A.K."/>
            <person name="Eriksson A.-S."/>
            <person name="Winkler H.H."/>
            <person name="Kurland C.G."/>
        </authorList>
    </citation>
    <scope>NUCLEOTIDE SEQUENCE [LARGE SCALE GENOMIC DNA]</scope>
    <source>
        <strain>Madrid E</strain>
    </source>
</reference>
<feature type="chain" id="PRO_0000096972" description="tRNA N6-adenosine threonylcarbamoyltransferase">
    <location>
        <begin position="1"/>
        <end position="387"/>
    </location>
</feature>
<feature type="binding site" evidence="1">
    <location>
        <position position="112"/>
    </location>
    <ligand>
        <name>Fe cation</name>
        <dbReference type="ChEBI" id="CHEBI:24875"/>
    </ligand>
</feature>
<feature type="binding site" evidence="1">
    <location>
        <position position="116"/>
    </location>
    <ligand>
        <name>Fe cation</name>
        <dbReference type="ChEBI" id="CHEBI:24875"/>
    </ligand>
</feature>
<feature type="binding site" evidence="1">
    <location>
        <begin position="134"/>
        <end position="138"/>
    </location>
    <ligand>
        <name>substrate</name>
    </ligand>
</feature>
<feature type="binding site" evidence="1">
    <location>
        <position position="167"/>
    </location>
    <ligand>
        <name>substrate</name>
    </ligand>
</feature>
<feature type="binding site" evidence="1">
    <location>
        <position position="180"/>
    </location>
    <ligand>
        <name>substrate</name>
    </ligand>
</feature>
<feature type="binding site" evidence="1">
    <location>
        <position position="325"/>
    </location>
    <ligand>
        <name>substrate</name>
    </ligand>
</feature>
<feature type="binding site" evidence="1">
    <location>
        <position position="353"/>
    </location>
    <ligand>
        <name>Fe cation</name>
        <dbReference type="ChEBI" id="CHEBI:24875"/>
    </ligand>
</feature>
<comment type="function">
    <text evidence="1">Required for the formation of a threonylcarbamoyl group on adenosine at position 37 (t(6)A37) in tRNAs that read codons beginning with adenine. Is involved in the transfer of the threonylcarbamoyl moiety of threonylcarbamoyl-AMP (TC-AMP) to the N6 group of A37, together with TsaE and TsaB. TsaD likely plays a direct catalytic role in this reaction.</text>
</comment>
<comment type="catalytic activity">
    <reaction evidence="1">
        <text>L-threonylcarbamoyladenylate + adenosine(37) in tRNA = N(6)-L-threonylcarbamoyladenosine(37) in tRNA + AMP + H(+)</text>
        <dbReference type="Rhea" id="RHEA:37059"/>
        <dbReference type="Rhea" id="RHEA-COMP:10162"/>
        <dbReference type="Rhea" id="RHEA-COMP:10163"/>
        <dbReference type="ChEBI" id="CHEBI:15378"/>
        <dbReference type="ChEBI" id="CHEBI:73682"/>
        <dbReference type="ChEBI" id="CHEBI:74411"/>
        <dbReference type="ChEBI" id="CHEBI:74418"/>
        <dbReference type="ChEBI" id="CHEBI:456215"/>
        <dbReference type="EC" id="2.3.1.234"/>
    </reaction>
</comment>
<comment type="cofactor">
    <cofactor evidence="1">
        <name>Fe(2+)</name>
        <dbReference type="ChEBI" id="CHEBI:29033"/>
    </cofactor>
    <text evidence="1">Binds 1 Fe(2+) ion per subunit.</text>
</comment>
<comment type="subcellular location">
    <subcellularLocation>
        <location evidence="1">Cytoplasm</location>
    </subcellularLocation>
</comment>
<comment type="similarity">
    <text evidence="1">Belongs to the KAE1 / TsaD family.</text>
</comment>
<sequence>MKKILGIESSCDDTAISIITERRKILSNIIISQNTEHAVFGGVVPEIAARSHLSNLDQALKNVLKKSNTELTEISAIAATSGPGLIGGVIVGSMFARSLSSALKKPFIAINHLEGHALTARLTDNISYPYLLLLASGGHCQFVAVLGLGKYKILGTTIDDAVGETFDKVAKMLNLSFPGGPEIEKRAKLGNPHKYKFPKPIINSGNCNMSFSGLKTAVRTLIMNLKEVNDSVINDIAASFQFTIGAILSSKMQDAIRLYKQILNDYYEDINHPTKLNLKSFRKDEFNWKPLECITRPKYRIHIQNSYRSNLLNDTIVIAGGVAANKYLQEILSDCTRPYGYRLIAPPMHLCTDNAAMIAYAGLERYNNKLFSPLDFCPKAKWSLEDI</sequence>
<gene>
    <name evidence="1" type="primary">tsaD</name>
    <name type="synonym">gcp</name>
    <name type="ordered locus">RP037</name>
</gene>
<evidence type="ECO:0000255" key="1">
    <source>
        <dbReference type="HAMAP-Rule" id="MF_01445"/>
    </source>
</evidence>
<organism>
    <name type="scientific">Rickettsia prowazekii (strain Madrid E)</name>
    <dbReference type="NCBI Taxonomy" id="272947"/>
    <lineage>
        <taxon>Bacteria</taxon>
        <taxon>Pseudomonadati</taxon>
        <taxon>Pseudomonadota</taxon>
        <taxon>Alphaproteobacteria</taxon>
        <taxon>Rickettsiales</taxon>
        <taxon>Rickettsiaceae</taxon>
        <taxon>Rickettsieae</taxon>
        <taxon>Rickettsia</taxon>
        <taxon>typhus group</taxon>
    </lineage>
</organism>
<dbReference type="EC" id="2.3.1.234" evidence="1"/>
<dbReference type="EMBL" id="AJ235270">
    <property type="protein sequence ID" value="CAA14508.1"/>
    <property type="molecule type" value="Genomic_DNA"/>
</dbReference>
<dbReference type="PIR" id="E71711">
    <property type="entry name" value="E71711"/>
</dbReference>
<dbReference type="RefSeq" id="NP_220431.1">
    <property type="nucleotide sequence ID" value="NC_000963.1"/>
</dbReference>
<dbReference type="RefSeq" id="WP_004596647.1">
    <property type="nucleotide sequence ID" value="NC_000963.1"/>
</dbReference>
<dbReference type="SMR" id="Q9ZEA8"/>
<dbReference type="STRING" id="272947.gene:17555120"/>
<dbReference type="EnsemblBacteria" id="CAA14508">
    <property type="protein sequence ID" value="CAA14508"/>
    <property type="gene ID" value="CAA14508"/>
</dbReference>
<dbReference type="GeneID" id="57569165"/>
<dbReference type="KEGG" id="rpr:RP037"/>
<dbReference type="PATRIC" id="fig|272947.5.peg.38"/>
<dbReference type="eggNOG" id="COG0533">
    <property type="taxonomic scope" value="Bacteria"/>
</dbReference>
<dbReference type="HOGENOM" id="CLU_023208_0_2_5"/>
<dbReference type="OrthoDB" id="9806197at2"/>
<dbReference type="Proteomes" id="UP000002480">
    <property type="component" value="Chromosome"/>
</dbReference>
<dbReference type="GO" id="GO:0005737">
    <property type="term" value="C:cytoplasm"/>
    <property type="evidence" value="ECO:0007669"/>
    <property type="project" value="UniProtKB-SubCell"/>
</dbReference>
<dbReference type="GO" id="GO:0005506">
    <property type="term" value="F:iron ion binding"/>
    <property type="evidence" value="ECO:0007669"/>
    <property type="project" value="UniProtKB-UniRule"/>
</dbReference>
<dbReference type="GO" id="GO:0061711">
    <property type="term" value="F:N(6)-L-threonylcarbamoyladenine synthase activity"/>
    <property type="evidence" value="ECO:0007669"/>
    <property type="project" value="UniProtKB-EC"/>
</dbReference>
<dbReference type="GO" id="GO:0002949">
    <property type="term" value="P:tRNA threonylcarbamoyladenosine modification"/>
    <property type="evidence" value="ECO:0007669"/>
    <property type="project" value="UniProtKB-UniRule"/>
</dbReference>
<dbReference type="CDD" id="cd24133">
    <property type="entry name" value="ASKHA_NBD_TsaD_bac"/>
    <property type="match status" value="1"/>
</dbReference>
<dbReference type="FunFam" id="3.30.420.40:FF:000012">
    <property type="entry name" value="tRNA N6-adenosine threonylcarbamoyltransferase"/>
    <property type="match status" value="1"/>
</dbReference>
<dbReference type="Gene3D" id="3.30.420.40">
    <property type="match status" value="3"/>
</dbReference>
<dbReference type="HAMAP" id="MF_01445">
    <property type="entry name" value="TsaD"/>
    <property type="match status" value="1"/>
</dbReference>
<dbReference type="InterPro" id="IPR043129">
    <property type="entry name" value="ATPase_NBD"/>
</dbReference>
<dbReference type="InterPro" id="IPR000905">
    <property type="entry name" value="Gcp-like_dom"/>
</dbReference>
<dbReference type="InterPro" id="IPR017861">
    <property type="entry name" value="KAE1/TsaD"/>
</dbReference>
<dbReference type="InterPro" id="IPR017860">
    <property type="entry name" value="Peptidase_M22_CS"/>
</dbReference>
<dbReference type="InterPro" id="IPR022437">
    <property type="entry name" value="RPE3"/>
</dbReference>
<dbReference type="InterPro" id="IPR022450">
    <property type="entry name" value="TsaD"/>
</dbReference>
<dbReference type="NCBIfam" id="TIGR00329">
    <property type="entry name" value="gcp_kae1"/>
    <property type="match status" value="1"/>
</dbReference>
<dbReference type="NCBIfam" id="TIGR03775">
    <property type="entry name" value="RPE3"/>
    <property type="match status" value="1"/>
</dbReference>
<dbReference type="NCBIfam" id="TIGR03723">
    <property type="entry name" value="T6A_TsaD_YgjD"/>
    <property type="match status" value="1"/>
</dbReference>
<dbReference type="PANTHER" id="PTHR11735">
    <property type="entry name" value="TRNA N6-ADENOSINE THREONYLCARBAMOYLTRANSFERASE"/>
    <property type="match status" value="1"/>
</dbReference>
<dbReference type="PANTHER" id="PTHR11735:SF6">
    <property type="entry name" value="TRNA N6-ADENOSINE THREONYLCARBAMOYLTRANSFERASE, MITOCHONDRIAL"/>
    <property type="match status" value="1"/>
</dbReference>
<dbReference type="Pfam" id="PF00814">
    <property type="entry name" value="TsaD"/>
    <property type="match status" value="2"/>
</dbReference>
<dbReference type="PRINTS" id="PR00789">
    <property type="entry name" value="OSIALOPTASE"/>
</dbReference>
<dbReference type="SUPFAM" id="SSF53067">
    <property type="entry name" value="Actin-like ATPase domain"/>
    <property type="match status" value="3"/>
</dbReference>
<dbReference type="PROSITE" id="PS01016">
    <property type="entry name" value="GLYCOPROTEASE"/>
    <property type="match status" value="1"/>
</dbReference>
<protein>
    <recommendedName>
        <fullName evidence="1">tRNA N6-adenosine threonylcarbamoyltransferase</fullName>
        <ecNumber evidence="1">2.3.1.234</ecNumber>
    </recommendedName>
    <alternativeName>
        <fullName evidence="1">N6-L-threonylcarbamoyladenine synthase</fullName>
        <shortName evidence="1">t(6)A synthase</shortName>
    </alternativeName>
    <alternativeName>
        <fullName evidence="1">t(6)A37 threonylcarbamoyladenosine biosynthesis protein TsaD</fullName>
    </alternativeName>
    <alternativeName>
        <fullName evidence="1">tRNA threonylcarbamoyladenosine biosynthesis protein TsaD</fullName>
    </alternativeName>
</protein>
<proteinExistence type="inferred from homology"/>
<keyword id="KW-0012">Acyltransferase</keyword>
<keyword id="KW-0963">Cytoplasm</keyword>
<keyword id="KW-0408">Iron</keyword>
<keyword id="KW-0479">Metal-binding</keyword>
<keyword id="KW-1185">Reference proteome</keyword>
<keyword id="KW-0808">Transferase</keyword>
<keyword id="KW-0819">tRNA processing</keyword>
<accession>Q9ZEA8</accession>